<feature type="chain" id="PRO_0000082378" description="ATP synthase subunit b">
    <location>
        <begin position="1"/>
        <end position="168"/>
    </location>
</feature>
<feature type="transmembrane region" description="Helical" evidence="1">
    <location>
        <begin position="11"/>
        <end position="31"/>
    </location>
</feature>
<sequence length="168" mass="18002">MSTLLLEAAPNTVLGNIIVVSGAFIILLVLLRLFAWNAITSVFASRAKKISDDIDAAEANNKQAADLVKQRQAELAGSKEEAANIIQVANDTASQNRAKVLATANEEATSLKKRAQEDIEQERKEALNTVKGDVADISVQIAEKLIGQSLDASAQQELIDSYLAKLGE</sequence>
<keyword id="KW-0066">ATP synthesis</keyword>
<keyword id="KW-1003">Cell membrane</keyword>
<keyword id="KW-0138">CF(0)</keyword>
<keyword id="KW-0375">Hydrogen ion transport</keyword>
<keyword id="KW-0406">Ion transport</keyword>
<keyword id="KW-0472">Membrane</keyword>
<keyword id="KW-1185">Reference proteome</keyword>
<keyword id="KW-0812">Transmembrane</keyword>
<keyword id="KW-1133">Transmembrane helix</keyword>
<keyword id="KW-0813">Transport</keyword>
<comment type="function">
    <text evidence="1">F(1)F(0) ATP synthase produces ATP from ADP in the presence of a proton or sodium gradient. F-type ATPases consist of two structural domains, F(1) containing the extramembraneous catalytic core and F(0) containing the membrane proton channel, linked together by a central stalk and a peripheral stalk. During catalysis, ATP synthesis in the catalytic domain of F(1) is coupled via a rotary mechanism of the central stalk subunits to proton translocation.</text>
</comment>
<comment type="function">
    <text evidence="1">Component of the F(0) channel, it forms part of the peripheral stalk, linking F(1) to F(0).</text>
</comment>
<comment type="subunit">
    <text evidence="1">F-type ATPases have 2 components, F(1) - the catalytic core - and F(0) - the membrane proton channel. F(1) has five subunits: alpha(3), beta(3), gamma(1), delta(1), epsilon(1). F(0) has three main subunits: a(1), b(2) and c(10-14). The alpha and beta chains form an alternating ring which encloses part of the gamma chain. F(1) is attached to F(0) by a central stalk formed by the gamma and epsilon chains, while a peripheral stalk is formed by the delta and b chains.</text>
</comment>
<comment type="subcellular location">
    <subcellularLocation>
        <location evidence="1">Cell membrane</location>
        <topology evidence="1">Single-pass membrane protein</topology>
    </subcellularLocation>
</comment>
<comment type="similarity">
    <text evidence="1">Belongs to the ATPase B chain family.</text>
</comment>
<evidence type="ECO:0000255" key="1">
    <source>
        <dbReference type="HAMAP-Rule" id="MF_01398"/>
    </source>
</evidence>
<accession>P0A2Z0</accession>
<accession>Q9RAU4</accession>
<protein>
    <recommendedName>
        <fullName evidence="1">ATP synthase subunit b</fullName>
    </recommendedName>
    <alternativeName>
        <fullName evidence="1">ATP synthase F(0) sector subunit b</fullName>
    </alternativeName>
    <alternativeName>
        <fullName evidence="1">ATPase subunit I</fullName>
    </alternativeName>
    <alternativeName>
        <fullName evidence="1">F-type ATPase subunit b</fullName>
        <shortName evidence="1">F-ATPase subunit b</shortName>
    </alternativeName>
</protein>
<name>ATPF_LACLA</name>
<dbReference type="EMBL" id="AE005176">
    <property type="protein sequence ID" value="AAK05866.1"/>
    <property type="molecule type" value="Genomic_DNA"/>
</dbReference>
<dbReference type="PIR" id="H86845">
    <property type="entry name" value="H86845"/>
</dbReference>
<dbReference type="RefSeq" id="NP_267924.1">
    <property type="nucleotide sequence ID" value="NC_002662.1"/>
</dbReference>
<dbReference type="RefSeq" id="WP_010906128.1">
    <property type="nucleotide sequence ID" value="NC_002662.1"/>
</dbReference>
<dbReference type="SMR" id="P0A2Z0"/>
<dbReference type="PaxDb" id="272623-L11208"/>
<dbReference type="EnsemblBacteria" id="AAK05866">
    <property type="protein sequence ID" value="AAK05866"/>
    <property type="gene ID" value="L11208"/>
</dbReference>
<dbReference type="GeneID" id="89633969"/>
<dbReference type="KEGG" id="lla:L11208"/>
<dbReference type="PATRIC" id="fig|272623.7.peg.1895"/>
<dbReference type="eggNOG" id="COG0711">
    <property type="taxonomic scope" value="Bacteria"/>
</dbReference>
<dbReference type="HOGENOM" id="CLU_079215_4_2_9"/>
<dbReference type="OrthoDB" id="282095at2"/>
<dbReference type="Proteomes" id="UP000002196">
    <property type="component" value="Chromosome"/>
</dbReference>
<dbReference type="GO" id="GO:0005886">
    <property type="term" value="C:plasma membrane"/>
    <property type="evidence" value="ECO:0007669"/>
    <property type="project" value="UniProtKB-SubCell"/>
</dbReference>
<dbReference type="GO" id="GO:0045259">
    <property type="term" value="C:proton-transporting ATP synthase complex"/>
    <property type="evidence" value="ECO:0007669"/>
    <property type="project" value="UniProtKB-KW"/>
</dbReference>
<dbReference type="GO" id="GO:0046933">
    <property type="term" value="F:proton-transporting ATP synthase activity, rotational mechanism"/>
    <property type="evidence" value="ECO:0007669"/>
    <property type="project" value="UniProtKB-UniRule"/>
</dbReference>
<dbReference type="GO" id="GO:0046961">
    <property type="term" value="F:proton-transporting ATPase activity, rotational mechanism"/>
    <property type="evidence" value="ECO:0007669"/>
    <property type="project" value="TreeGrafter"/>
</dbReference>
<dbReference type="CDD" id="cd06503">
    <property type="entry name" value="ATP-synt_Fo_b"/>
    <property type="match status" value="1"/>
</dbReference>
<dbReference type="Gene3D" id="1.20.5.620">
    <property type="entry name" value="F1F0 ATP synthase subunit B, membrane domain"/>
    <property type="match status" value="1"/>
</dbReference>
<dbReference type="HAMAP" id="MF_01398">
    <property type="entry name" value="ATP_synth_b_bprime"/>
    <property type="match status" value="1"/>
</dbReference>
<dbReference type="InterPro" id="IPR028987">
    <property type="entry name" value="ATP_synth_B-like_membr_sf"/>
</dbReference>
<dbReference type="InterPro" id="IPR002146">
    <property type="entry name" value="ATP_synth_b/b'su_bac/chlpt"/>
</dbReference>
<dbReference type="InterPro" id="IPR005864">
    <property type="entry name" value="ATP_synth_F0_bsu_bac"/>
</dbReference>
<dbReference type="InterPro" id="IPR050059">
    <property type="entry name" value="ATP_synthase_B_chain"/>
</dbReference>
<dbReference type="NCBIfam" id="TIGR01144">
    <property type="entry name" value="ATP_synt_b"/>
    <property type="match status" value="1"/>
</dbReference>
<dbReference type="PANTHER" id="PTHR33445:SF1">
    <property type="entry name" value="ATP SYNTHASE SUBUNIT B"/>
    <property type="match status" value="1"/>
</dbReference>
<dbReference type="PANTHER" id="PTHR33445">
    <property type="entry name" value="ATP SYNTHASE SUBUNIT B', CHLOROPLASTIC"/>
    <property type="match status" value="1"/>
</dbReference>
<dbReference type="Pfam" id="PF00430">
    <property type="entry name" value="ATP-synt_B"/>
    <property type="match status" value="1"/>
</dbReference>
<dbReference type="SUPFAM" id="SSF81573">
    <property type="entry name" value="F1F0 ATP synthase subunit B, membrane domain"/>
    <property type="match status" value="1"/>
</dbReference>
<reference key="1">
    <citation type="journal article" date="2001" name="Genome Res.">
        <title>The complete genome sequence of the lactic acid bacterium Lactococcus lactis ssp. lactis IL1403.</title>
        <authorList>
            <person name="Bolotin A."/>
            <person name="Wincker P."/>
            <person name="Mauger S."/>
            <person name="Jaillon O."/>
            <person name="Malarme K."/>
            <person name="Weissenbach J."/>
            <person name="Ehrlich S.D."/>
            <person name="Sorokin A."/>
        </authorList>
    </citation>
    <scope>NUCLEOTIDE SEQUENCE [LARGE SCALE GENOMIC DNA]</scope>
    <source>
        <strain>IL1403</strain>
    </source>
</reference>
<organism>
    <name type="scientific">Lactococcus lactis subsp. lactis (strain IL1403)</name>
    <name type="common">Streptococcus lactis</name>
    <dbReference type="NCBI Taxonomy" id="272623"/>
    <lineage>
        <taxon>Bacteria</taxon>
        <taxon>Bacillati</taxon>
        <taxon>Bacillota</taxon>
        <taxon>Bacilli</taxon>
        <taxon>Lactobacillales</taxon>
        <taxon>Streptococcaceae</taxon>
        <taxon>Lactococcus</taxon>
    </lineage>
</organism>
<gene>
    <name evidence="1" type="primary">atpF</name>
    <name type="ordered locus">LL1768</name>
    <name type="ORF">L11208</name>
</gene>
<proteinExistence type="inferred from homology"/>